<feature type="chain" id="PRO_0000456491" description="Large ribosomal subunit protein eL6">
    <location>
        <begin position="1"/>
        <end position="176"/>
    </location>
</feature>
<feature type="region of interest" description="Disordered" evidence="1">
    <location>
        <begin position="1"/>
        <end position="27"/>
    </location>
</feature>
<organism>
    <name type="scientific">Candida albicans (strain SC5314 / ATCC MYA-2876)</name>
    <name type="common">Yeast</name>
    <dbReference type="NCBI Taxonomy" id="237561"/>
    <lineage>
        <taxon>Eukaryota</taxon>
        <taxon>Fungi</taxon>
        <taxon>Dikarya</taxon>
        <taxon>Ascomycota</taxon>
        <taxon>Saccharomycotina</taxon>
        <taxon>Pichiomycetes</taxon>
        <taxon>Debaryomycetaceae</taxon>
        <taxon>Candida/Lodderomyces clade</taxon>
        <taxon>Candida</taxon>
    </lineage>
</organism>
<protein>
    <recommendedName>
        <fullName evidence="3">Large ribosomal subunit protein eL6</fullName>
    </recommendedName>
    <alternativeName>
        <fullName>60S ribosomal protein L6</fullName>
    </alternativeName>
</protein>
<accession>A0A1D8PCX8</accession>
<evidence type="ECO:0000256" key="1">
    <source>
        <dbReference type="SAM" id="MobiDB-lite"/>
    </source>
</evidence>
<evidence type="ECO:0000269" key="2">
    <source>
    </source>
</evidence>
<evidence type="ECO:0000303" key="3">
    <source>
    </source>
</evidence>
<evidence type="ECO:0000305" key="4"/>
<evidence type="ECO:0000305" key="5">
    <source>
    </source>
</evidence>
<evidence type="ECO:0007744" key="6">
    <source>
        <dbReference type="PDB" id="7PZY"/>
    </source>
</evidence>
<evidence type="ECO:0007744" key="7">
    <source>
        <dbReference type="PDB" id="7Q0F"/>
    </source>
</evidence>
<evidence type="ECO:0007744" key="8">
    <source>
        <dbReference type="PDB" id="7Q0P"/>
    </source>
</evidence>
<keyword id="KW-0002">3D-structure</keyword>
<keyword id="KW-0963">Cytoplasm</keyword>
<keyword id="KW-1185">Reference proteome</keyword>
<keyword id="KW-0687">Ribonucleoprotein</keyword>
<keyword id="KW-0689">Ribosomal protein</keyword>
<reference key="1">
    <citation type="journal article" date="2004" name="Proc. Natl. Acad. Sci. U.S.A.">
        <title>The diploid genome sequence of Candida albicans.</title>
        <authorList>
            <person name="Jones T."/>
            <person name="Federspiel N.A."/>
            <person name="Chibana H."/>
            <person name="Dungan J."/>
            <person name="Kalman S."/>
            <person name="Magee B.B."/>
            <person name="Newport G."/>
            <person name="Thorstenson Y.R."/>
            <person name="Agabian N."/>
            <person name="Magee P.T."/>
            <person name="Davis R.W."/>
            <person name="Scherer S."/>
        </authorList>
    </citation>
    <scope>NUCLEOTIDE SEQUENCE [LARGE SCALE GENOMIC DNA]</scope>
    <source>
        <strain>SC5314 / ATCC MYA-2876</strain>
    </source>
</reference>
<reference key="2">
    <citation type="journal article" date="2007" name="Genome Biol.">
        <title>Assembly of the Candida albicans genome into sixteen supercontigs aligned on the eight chromosomes.</title>
        <authorList>
            <person name="van het Hoog M."/>
            <person name="Rast T.J."/>
            <person name="Martchenko M."/>
            <person name="Grindle S."/>
            <person name="Dignard D."/>
            <person name="Hogues H."/>
            <person name="Cuomo C."/>
            <person name="Berriman M."/>
            <person name="Scherer S."/>
            <person name="Magee B.B."/>
            <person name="Whiteway M."/>
            <person name="Chibana H."/>
            <person name="Nantel A."/>
            <person name="Magee P.T."/>
        </authorList>
    </citation>
    <scope>GENOME REANNOTATION</scope>
    <source>
        <strain>SC5314 / ATCC MYA-2876</strain>
    </source>
</reference>
<reference key="3">
    <citation type="journal article" date="2013" name="Genome Biol.">
        <title>Assembly of a phased diploid Candida albicans genome facilitates allele-specific measurements and provides a simple model for repeat and indel structure.</title>
        <authorList>
            <person name="Muzzey D."/>
            <person name="Schwartz K."/>
            <person name="Weissman J.S."/>
            <person name="Sherlock G."/>
        </authorList>
    </citation>
    <scope>NUCLEOTIDE SEQUENCE [LARGE SCALE GENOMIC DNA]</scope>
    <scope>GENOME REANNOTATION</scope>
    <source>
        <strain>SC5314 / ATCC MYA-2876</strain>
    </source>
</reference>
<reference evidence="6 7 8" key="4">
    <citation type="journal article" date="2022" name="Sci. Adv.">
        <title>E-site drug specificity of the human pathogen Candida albicans ribosome.</title>
        <authorList>
            <person name="Zgadzay Y."/>
            <person name="Kolosova O."/>
            <person name="Stetsenko A."/>
            <person name="Wu C."/>
            <person name="Bruchlen D."/>
            <person name="Usachev K."/>
            <person name="Validov S."/>
            <person name="Jenner L."/>
            <person name="Rogachev A."/>
            <person name="Yusupova G."/>
            <person name="Sachs M.S."/>
            <person name="Guskov A."/>
            <person name="Yusupov M."/>
        </authorList>
    </citation>
    <scope>STRUCTURE BY ELECTRON MICROSCOPY (2.32 ANGSTROMS) OF THE 80S RIBOSOME</scope>
    <scope>SUBUNIT</scope>
</reference>
<comment type="function">
    <text evidence="5">Component of the ribosome, a large ribonucleoprotein complex responsible for the synthesis of proteins in the cell. The small ribosomal subunit (SSU) binds messenger RNAs (mRNAs) and translates the encoded message by selecting cognate aminoacyl-transfer RNA (tRNA) molecules. The large subunit (LSU) contains the ribosomal catalytic site termed the peptidyl transferase center (PTC), which catalyzes the formation of peptide bonds, thereby polymerizing the amino acids delivered by tRNAs into a polypeptide chain. The nascent polypeptides leave the ribosome through a tunnel in the LSU and interact with protein factors that function in enzymatic processing, targeting, and the membrane insertion of nascent chains at the exit of the ribosomal tunnel.</text>
</comment>
<comment type="subunit">
    <text evidence="2">Component of the large ribosomal subunit (PubMed:35613268). Mature ribosomes consist of a small (40S) and a large (60S) subunit (PubMed:35613268). The 40S subunit contains about 32 different proteins and 1 molecule of RNA (18S) (PubMed:35613268). The 60S subunit contains 45 different proteins and 3 molecules of RNA (25S, 5.8S and 5S) (PubMed:35613268).</text>
</comment>
<comment type="subcellular location">
    <subcellularLocation>
        <location evidence="5">Cytoplasm</location>
    </subcellularLocation>
</comment>
<comment type="similarity">
    <text evidence="4">Belongs to the eukaryotic ribosomal protein eL6 family.</text>
</comment>
<proteinExistence type="evidence at protein level"/>
<sequence length="176" mass="19763">MSQVAPKWYQSEDVPAPKQTRKTARPQKLRASLVPGTVLILLAGRFRGKRVVYLKNLEDNTLLVSGPFKVNGVPLRRVNARYVIATSTKVNVSGVDVSKFNVEYFAREKSSKSKKSEAEFFNESQPKKEIKAERVADQKSVDAALLSEIKKTPLLKQYLAASFSLKNGDRPHLLKF</sequence>
<dbReference type="EMBL" id="CP017623">
    <property type="protein sequence ID" value="AOW25992.1"/>
    <property type="molecule type" value="Genomic_DNA"/>
</dbReference>
<dbReference type="RefSeq" id="XP_019330624.1">
    <property type="nucleotide sequence ID" value="XM_019475079.1"/>
</dbReference>
<dbReference type="PDB" id="7PZY">
    <property type="method" value="EM"/>
    <property type="resolution" value="2.32 A"/>
    <property type="chains" value="n=1-176"/>
</dbReference>
<dbReference type="PDB" id="7Q08">
    <property type="method" value="EM"/>
    <property type="resolution" value="2.56 A"/>
    <property type="chains" value="n=1-176"/>
</dbReference>
<dbReference type="PDB" id="7Q0F">
    <property type="method" value="EM"/>
    <property type="resolution" value="2.64 A"/>
    <property type="chains" value="n=1-176"/>
</dbReference>
<dbReference type="PDB" id="7Q0P">
    <property type="method" value="EM"/>
    <property type="resolution" value="2.77 A"/>
    <property type="chains" value="n=1-176"/>
</dbReference>
<dbReference type="PDB" id="7Q0R">
    <property type="method" value="EM"/>
    <property type="resolution" value="2.67 A"/>
    <property type="chains" value="n=1-176"/>
</dbReference>
<dbReference type="PDB" id="8C3A">
    <property type="method" value="X-ray"/>
    <property type="resolution" value="3.00 A"/>
    <property type="chains" value="BA/n=1-176"/>
</dbReference>
<dbReference type="PDB" id="8OGJ">
    <property type="method" value="EM"/>
    <property type="resolution" value="3.10 A"/>
    <property type="chains" value="n=1-176"/>
</dbReference>
<dbReference type="PDB" id="8OH6">
    <property type="method" value="X-ray"/>
    <property type="resolution" value="3.35 A"/>
    <property type="chains" value="BA/n=1-176"/>
</dbReference>
<dbReference type="PDB" id="8OI5">
    <property type="method" value="X-ray"/>
    <property type="resolution" value="2.90 A"/>
    <property type="chains" value="BA/n=1-176"/>
</dbReference>
<dbReference type="PDB" id="8OJ3">
    <property type="method" value="X-ray"/>
    <property type="resolution" value="3.50 A"/>
    <property type="chains" value="BA/n=1-176"/>
</dbReference>
<dbReference type="PDBsum" id="7PZY"/>
<dbReference type="PDBsum" id="7Q08"/>
<dbReference type="PDBsum" id="7Q0F"/>
<dbReference type="PDBsum" id="7Q0P"/>
<dbReference type="PDBsum" id="7Q0R"/>
<dbReference type="PDBsum" id="8C3A"/>
<dbReference type="PDBsum" id="8OGJ"/>
<dbReference type="PDBsum" id="8OH6"/>
<dbReference type="PDBsum" id="8OI5"/>
<dbReference type="PDBsum" id="8OJ3"/>
<dbReference type="EMDB" id="EMD-13737"/>
<dbReference type="EMDB" id="EMD-13741"/>
<dbReference type="EMDB" id="EMD-13744"/>
<dbReference type="EMDB" id="EMD-13749"/>
<dbReference type="EMDB" id="EMD-13750"/>
<dbReference type="SMR" id="A0A1D8PCX8"/>
<dbReference type="FunCoup" id="A0A1D8PCX8">
    <property type="interactions" value="1266"/>
</dbReference>
<dbReference type="STRING" id="237561.A0A1D8PCX8"/>
<dbReference type="EnsemblFungi" id="C1_03110W_A-T">
    <property type="protein sequence ID" value="C1_03110W_A-T-p1"/>
    <property type="gene ID" value="C1_03110W_A"/>
</dbReference>
<dbReference type="GeneID" id="30514975"/>
<dbReference type="KEGG" id="cal:CAALFM_C103110WA"/>
<dbReference type="CGD" id="CAL0000181737">
    <property type="gene designation" value="RPL6"/>
</dbReference>
<dbReference type="VEuPathDB" id="FungiDB:C1_03110W_A"/>
<dbReference type="eggNOG" id="KOG1694">
    <property type="taxonomic scope" value="Eukaryota"/>
</dbReference>
<dbReference type="InParanoid" id="A0A1D8PCX8"/>
<dbReference type="OMA" id="KWYNADD"/>
<dbReference type="OrthoDB" id="2436667at2759"/>
<dbReference type="Proteomes" id="UP000000559">
    <property type="component" value="Chromosome 1"/>
</dbReference>
<dbReference type="GO" id="GO:0009986">
    <property type="term" value="C:cell surface"/>
    <property type="evidence" value="ECO:0000314"/>
    <property type="project" value="CGD"/>
</dbReference>
<dbReference type="GO" id="GO:0022625">
    <property type="term" value="C:cytosolic large ribosomal subunit"/>
    <property type="evidence" value="ECO:0000318"/>
    <property type="project" value="GO_Central"/>
</dbReference>
<dbReference type="GO" id="GO:0016020">
    <property type="term" value="C:membrane"/>
    <property type="evidence" value="ECO:0000314"/>
    <property type="project" value="CGD"/>
</dbReference>
<dbReference type="GO" id="GO:0030684">
    <property type="term" value="C:preribosome"/>
    <property type="evidence" value="ECO:0007669"/>
    <property type="project" value="EnsemblFungi"/>
</dbReference>
<dbReference type="GO" id="GO:0003723">
    <property type="term" value="F:RNA binding"/>
    <property type="evidence" value="ECO:0000318"/>
    <property type="project" value="GO_Central"/>
</dbReference>
<dbReference type="GO" id="GO:0003735">
    <property type="term" value="F:structural constituent of ribosome"/>
    <property type="evidence" value="ECO:0000318"/>
    <property type="project" value="GO_Central"/>
</dbReference>
<dbReference type="GO" id="GO:0009267">
    <property type="term" value="P:cellular response to starvation"/>
    <property type="evidence" value="ECO:0000315"/>
    <property type="project" value="CGD"/>
</dbReference>
<dbReference type="GO" id="GO:0002181">
    <property type="term" value="P:cytoplasmic translation"/>
    <property type="evidence" value="ECO:0000318"/>
    <property type="project" value="GO_Central"/>
</dbReference>
<dbReference type="GO" id="GO:0030447">
    <property type="term" value="P:filamentous growth"/>
    <property type="evidence" value="ECO:0000315"/>
    <property type="project" value="CGD"/>
</dbReference>
<dbReference type="GO" id="GO:0036180">
    <property type="term" value="P:filamentous growth of a population of unicellular organisms in response to biotic stimulus"/>
    <property type="evidence" value="ECO:0000315"/>
    <property type="project" value="CGD"/>
</dbReference>
<dbReference type="GO" id="GO:0036170">
    <property type="term" value="P:filamentous growth of a population of unicellular organisms in response to starvation"/>
    <property type="evidence" value="ECO:0000315"/>
    <property type="project" value="CGD"/>
</dbReference>
<dbReference type="GO" id="GO:0006412">
    <property type="term" value="P:translation"/>
    <property type="evidence" value="ECO:0000303"/>
    <property type="project" value="CGD"/>
</dbReference>
<dbReference type="CDD" id="cd13156">
    <property type="entry name" value="KOW_RPL6"/>
    <property type="match status" value="1"/>
</dbReference>
<dbReference type="FunFam" id="2.30.30.30:FF:000014">
    <property type="entry name" value="60S ribosomal protein L6"/>
    <property type="match status" value="1"/>
</dbReference>
<dbReference type="Gene3D" id="2.30.30.30">
    <property type="match status" value="1"/>
</dbReference>
<dbReference type="InterPro" id="IPR000915">
    <property type="entry name" value="60S_ribosomal_eL6"/>
</dbReference>
<dbReference type="InterPro" id="IPR014722">
    <property type="entry name" value="Rib_uL2_dom2"/>
</dbReference>
<dbReference type="InterPro" id="IPR049633">
    <property type="entry name" value="Ribosomal_eL6_CS"/>
</dbReference>
<dbReference type="InterPro" id="IPR041997">
    <property type="entry name" value="Ribosomal_eL6_KOW"/>
</dbReference>
<dbReference type="InterPro" id="IPR008991">
    <property type="entry name" value="Translation_prot_SH3-like_sf"/>
</dbReference>
<dbReference type="PANTHER" id="PTHR10715">
    <property type="entry name" value="60S RIBOSOMAL PROTEIN L6"/>
    <property type="match status" value="1"/>
</dbReference>
<dbReference type="PANTHER" id="PTHR10715:SF0">
    <property type="entry name" value="LARGE RIBOSOMAL SUBUNIT PROTEIN EL6"/>
    <property type="match status" value="1"/>
</dbReference>
<dbReference type="Pfam" id="PF01159">
    <property type="entry name" value="Ribosomal_L6e"/>
    <property type="match status" value="1"/>
</dbReference>
<dbReference type="SUPFAM" id="SSF50104">
    <property type="entry name" value="Translation proteins SH3-like domain"/>
    <property type="match status" value="1"/>
</dbReference>
<dbReference type="PROSITE" id="PS01170">
    <property type="entry name" value="RIBOSOMAL_L6E"/>
    <property type="match status" value="1"/>
</dbReference>
<name>RL6_CANAL</name>
<gene>
    <name evidence="3" type="primary">RPL6</name>
    <name type="ordered locus">orf19.3003.1</name>
    <name type="ORF">CAALFM_C103110WA</name>
</gene>